<comment type="similarity">
    <text evidence="2">Belongs to the FAM50 family.</text>
</comment>
<protein>
    <recommendedName>
        <fullName>Protein FAM50 homolog</fullName>
    </recommendedName>
</protein>
<dbReference type="EMBL" id="AAFI02000047">
    <property type="protein sequence ID" value="EAL66156.1"/>
    <property type="molecule type" value="Genomic_DNA"/>
</dbReference>
<dbReference type="RefSeq" id="XP_640145.1">
    <property type="nucleotide sequence ID" value="XM_635053.1"/>
</dbReference>
<dbReference type="SMR" id="Q54S94"/>
<dbReference type="FunCoup" id="Q54S94">
    <property type="interactions" value="469"/>
</dbReference>
<dbReference type="STRING" id="44689.Q54S94"/>
<dbReference type="PaxDb" id="44689-DDB0233958"/>
<dbReference type="EnsemblProtists" id="EAL66156">
    <property type="protein sequence ID" value="EAL66156"/>
    <property type="gene ID" value="DDB_G0282593"/>
</dbReference>
<dbReference type="GeneID" id="8623683"/>
<dbReference type="KEGG" id="ddi:DDB_G0282593"/>
<dbReference type="dictyBase" id="DDB_G0282593"/>
<dbReference type="VEuPathDB" id="AmoebaDB:DDB_G0282593"/>
<dbReference type="eggNOG" id="KOG2894">
    <property type="taxonomic scope" value="Eukaryota"/>
</dbReference>
<dbReference type="HOGENOM" id="CLU_037985_1_0_1"/>
<dbReference type="InParanoid" id="Q54S94"/>
<dbReference type="OMA" id="RIAEDNM"/>
<dbReference type="PhylomeDB" id="Q54S94"/>
<dbReference type="Reactome" id="R-DDI-72163">
    <property type="pathway name" value="mRNA Splicing - Major Pathway"/>
</dbReference>
<dbReference type="PRO" id="PR:Q54S94"/>
<dbReference type="Proteomes" id="UP000002195">
    <property type="component" value="Chromosome 3"/>
</dbReference>
<dbReference type="GO" id="GO:0005634">
    <property type="term" value="C:nucleus"/>
    <property type="evidence" value="ECO:0000250"/>
    <property type="project" value="dictyBase"/>
</dbReference>
<dbReference type="GO" id="GO:0006325">
    <property type="term" value="P:chromatin organization"/>
    <property type="evidence" value="ECO:0000318"/>
    <property type="project" value="GO_Central"/>
</dbReference>
<dbReference type="InterPro" id="IPR048337">
    <property type="entry name" value="FAM50A/XAP5_C"/>
</dbReference>
<dbReference type="InterPro" id="IPR007005">
    <property type="entry name" value="XAP5"/>
</dbReference>
<dbReference type="PANTHER" id="PTHR12722:SF0">
    <property type="entry name" value="PROTEIN FAM50A"/>
    <property type="match status" value="1"/>
</dbReference>
<dbReference type="PANTHER" id="PTHR12722">
    <property type="entry name" value="XAP-5 PROTEIN-RELATED"/>
    <property type="match status" value="1"/>
</dbReference>
<dbReference type="Pfam" id="PF04921">
    <property type="entry name" value="XAP5"/>
    <property type="match status" value="1"/>
</dbReference>
<proteinExistence type="inferred from homology"/>
<sequence length="362" mass="42479">MAEYKGSSGDGNRIRMLEKQRENEIKEINKKKEKLKEEKKANVFSIHDKFQSVSDSSSSTSTQFQNVGLVSINDFHNNIKSQNNLNDSKNINNKRQTEKEIKKKSIVNKKLKITQKSKLSFELDDDGDGDGENNENNENNEENNENNEENKNDKENDEDNVNNNNNNKIKYFGKDPSVNTDFLPDIEREELEKLEREKLAKEWLDQQERIKSEEFEITYSFWDGSGHRRSMKCSKGTTIERFLENARKEFKELRGVSVDKLMFIKEDIIIPHNYSFYDLMLSKARGKSGPLFRFDVHEDVRLVNDATVEKEESHAAKMVESSWYERNKHIFPSSRWEYLAEDGFDTQDTDRKYTISDRLAKH</sequence>
<evidence type="ECO:0000256" key="1">
    <source>
        <dbReference type="SAM" id="MobiDB-lite"/>
    </source>
</evidence>
<evidence type="ECO:0000305" key="2"/>
<organism>
    <name type="scientific">Dictyostelium discoideum</name>
    <name type="common">Social amoeba</name>
    <dbReference type="NCBI Taxonomy" id="44689"/>
    <lineage>
        <taxon>Eukaryota</taxon>
        <taxon>Amoebozoa</taxon>
        <taxon>Evosea</taxon>
        <taxon>Eumycetozoa</taxon>
        <taxon>Dictyostelia</taxon>
        <taxon>Dictyosteliales</taxon>
        <taxon>Dictyosteliaceae</taxon>
        <taxon>Dictyostelium</taxon>
    </lineage>
</organism>
<name>FAM50_DICDI</name>
<reference key="1">
    <citation type="journal article" date="2005" name="Nature">
        <title>The genome of the social amoeba Dictyostelium discoideum.</title>
        <authorList>
            <person name="Eichinger L."/>
            <person name="Pachebat J.A."/>
            <person name="Gloeckner G."/>
            <person name="Rajandream M.A."/>
            <person name="Sucgang R."/>
            <person name="Berriman M."/>
            <person name="Song J."/>
            <person name="Olsen R."/>
            <person name="Szafranski K."/>
            <person name="Xu Q."/>
            <person name="Tunggal B."/>
            <person name="Kummerfeld S."/>
            <person name="Madera M."/>
            <person name="Konfortov B.A."/>
            <person name="Rivero F."/>
            <person name="Bankier A.T."/>
            <person name="Lehmann R."/>
            <person name="Hamlin N."/>
            <person name="Davies R."/>
            <person name="Gaudet P."/>
            <person name="Fey P."/>
            <person name="Pilcher K."/>
            <person name="Chen G."/>
            <person name="Saunders D."/>
            <person name="Sodergren E.J."/>
            <person name="Davis P."/>
            <person name="Kerhornou A."/>
            <person name="Nie X."/>
            <person name="Hall N."/>
            <person name="Anjard C."/>
            <person name="Hemphill L."/>
            <person name="Bason N."/>
            <person name="Farbrother P."/>
            <person name="Desany B."/>
            <person name="Just E."/>
            <person name="Morio T."/>
            <person name="Rost R."/>
            <person name="Churcher C.M."/>
            <person name="Cooper J."/>
            <person name="Haydock S."/>
            <person name="van Driessche N."/>
            <person name="Cronin A."/>
            <person name="Goodhead I."/>
            <person name="Muzny D.M."/>
            <person name="Mourier T."/>
            <person name="Pain A."/>
            <person name="Lu M."/>
            <person name="Harper D."/>
            <person name="Lindsay R."/>
            <person name="Hauser H."/>
            <person name="James K.D."/>
            <person name="Quiles M."/>
            <person name="Madan Babu M."/>
            <person name="Saito T."/>
            <person name="Buchrieser C."/>
            <person name="Wardroper A."/>
            <person name="Felder M."/>
            <person name="Thangavelu M."/>
            <person name="Johnson D."/>
            <person name="Knights A."/>
            <person name="Loulseged H."/>
            <person name="Mungall K.L."/>
            <person name="Oliver K."/>
            <person name="Price C."/>
            <person name="Quail M.A."/>
            <person name="Urushihara H."/>
            <person name="Hernandez J."/>
            <person name="Rabbinowitsch E."/>
            <person name="Steffen D."/>
            <person name="Sanders M."/>
            <person name="Ma J."/>
            <person name="Kohara Y."/>
            <person name="Sharp S."/>
            <person name="Simmonds M.N."/>
            <person name="Spiegler S."/>
            <person name="Tivey A."/>
            <person name="Sugano S."/>
            <person name="White B."/>
            <person name="Walker D."/>
            <person name="Woodward J.R."/>
            <person name="Winckler T."/>
            <person name="Tanaka Y."/>
            <person name="Shaulsky G."/>
            <person name="Schleicher M."/>
            <person name="Weinstock G.M."/>
            <person name="Rosenthal A."/>
            <person name="Cox E.C."/>
            <person name="Chisholm R.L."/>
            <person name="Gibbs R.A."/>
            <person name="Loomis W.F."/>
            <person name="Platzer M."/>
            <person name="Kay R.R."/>
            <person name="Williams J.G."/>
            <person name="Dear P.H."/>
            <person name="Noegel A.A."/>
            <person name="Barrell B.G."/>
            <person name="Kuspa A."/>
        </authorList>
    </citation>
    <scope>NUCLEOTIDE SEQUENCE [LARGE SCALE GENOMIC DNA]</scope>
    <source>
        <strain>AX4</strain>
    </source>
</reference>
<accession>Q54S94</accession>
<feature type="chain" id="PRO_0000326515" description="Protein FAM50 homolog">
    <location>
        <begin position="1"/>
        <end position="362"/>
    </location>
</feature>
<feature type="region of interest" description="Disordered" evidence="1">
    <location>
        <begin position="80"/>
        <end position="103"/>
    </location>
</feature>
<feature type="region of interest" description="Disordered" evidence="1">
    <location>
        <begin position="118"/>
        <end position="174"/>
    </location>
</feature>
<feature type="compositionally biased region" description="Low complexity" evidence="1">
    <location>
        <begin position="83"/>
        <end position="93"/>
    </location>
</feature>
<feature type="compositionally biased region" description="Acidic residues" evidence="1">
    <location>
        <begin position="122"/>
        <end position="147"/>
    </location>
</feature>
<gene>
    <name type="primary">fam50</name>
    <name type="ORF">DDB_G0282593</name>
</gene>
<keyword id="KW-1185">Reference proteome</keyword>